<evidence type="ECO:0000255" key="1">
    <source>
        <dbReference type="HAMAP-Rule" id="MF_00300"/>
    </source>
</evidence>
<sequence>MRYITAGESHGPQLTVILEGVPAGLTLAAEHINKELLRRQKGHGRGRRMQIEMDTVEIVSGVRHGMTLGSPITLIVKNDDFKHWTKVMGAEPISEKESKEMKRTITKPRPGHADLNGAIKYGHRDIRNVLERSSARETTVRVAAGAVAKQILKELGVEIAGHVLEIGGVKAKHISNLSIEEIQIITENSPVRCLDKTVEQEMMDAIDNAKSSGDSIGGIVEVIAEGMPIGVGSYVHYDRKLDAKLAGAIMSINAFKGAEIGVGFEAARQPGSKVHDEILWDEEQGYTRKTNNAGGLEGGMTTGMPIVVRGVMKPIPTLYKPLASVDIDTKEAFQASIERSDSCAVPAAGVVAESVVAWELAHALVEQFGKDRMELIQQNITQHNKYAKEF</sequence>
<organism>
    <name type="scientific">Bacillus anthracis</name>
    <dbReference type="NCBI Taxonomy" id="1392"/>
    <lineage>
        <taxon>Bacteria</taxon>
        <taxon>Bacillati</taxon>
        <taxon>Bacillota</taxon>
        <taxon>Bacilli</taxon>
        <taxon>Bacillales</taxon>
        <taxon>Bacillaceae</taxon>
        <taxon>Bacillus</taxon>
        <taxon>Bacillus cereus group</taxon>
    </lineage>
</organism>
<feature type="chain" id="PRO_0000140540" description="Chorismate synthase 1">
    <location>
        <begin position="1"/>
        <end position="390"/>
    </location>
</feature>
<feature type="binding site" evidence="1">
    <location>
        <position position="39"/>
    </location>
    <ligand>
        <name>NADP(+)</name>
        <dbReference type="ChEBI" id="CHEBI:58349"/>
    </ligand>
</feature>
<feature type="binding site" evidence="1">
    <location>
        <position position="45"/>
    </location>
    <ligand>
        <name>NADP(+)</name>
        <dbReference type="ChEBI" id="CHEBI:58349"/>
    </ligand>
</feature>
<feature type="binding site" evidence="1">
    <location>
        <begin position="132"/>
        <end position="134"/>
    </location>
    <ligand>
        <name>FMN</name>
        <dbReference type="ChEBI" id="CHEBI:58210"/>
    </ligand>
</feature>
<feature type="binding site" evidence="1">
    <location>
        <begin position="253"/>
        <end position="254"/>
    </location>
    <ligand>
        <name>FMN</name>
        <dbReference type="ChEBI" id="CHEBI:58210"/>
    </ligand>
</feature>
<feature type="binding site" evidence="1">
    <location>
        <position position="298"/>
    </location>
    <ligand>
        <name>FMN</name>
        <dbReference type="ChEBI" id="CHEBI:58210"/>
    </ligand>
</feature>
<feature type="binding site" evidence="1">
    <location>
        <begin position="313"/>
        <end position="317"/>
    </location>
    <ligand>
        <name>FMN</name>
        <dbReference type="ChEBI" id="CHEBI:58210"/>
    </ligand>
</feature>
<feature type="binding site" evidence="1">
    <location>
        <position position="339"/>
    </location>
    <ligand>
        <name>FMN</name>
        <dbReference type="ChEBI" id="CHEBI:58210"/>
    </ligand>
</feature>
<name>AROC1_BACAN</name>
<protein>
    <recommendedName>
        <fullName evidence="1">Chorismate synthase 1</fullName>
        <shortName evidence="1">CS 1</shortName>
        <ecNumber evidence="1">4.2.3.5</ecNumber>
    </recommendedName>
    <alternativeName>
        <fullName evidence="1">5-enolpyruvylshikimate-3-phosphate phospholyase 1</fullName>
    </alternativeName>
</protein>
<comment type="function">
    <text evidence="1">Catalyzes the anti-1,4-elimination of the C-3 phosphate and the C-6 proR hydrogen from 5-enolpyruvylshikimate-3-phosphate (EPSP) to yield chorismate, which is the branch point compound that serves as the starting substrate for the three terminal pathways of aromatic amino acid biosynthesis. This reaction introduces a second double bond into the aromatic ring system.</text>
</comment>
<comment type="catalytic activity">
    <reaction evidence="1">
        <text>5-O-(1-carboxyvinyl)-3-phosphoshikimate = chorismate + phosphate</text>
        <dbReference type="Rhea" id="RHEA:21020"/>
        <dbReference type="ChEBI" id="CHEBI:29748"/>
        <dbReference type="ChEBI" id="CHEBI:43474"/>
        <dbReference type="ChEBI" id="CHEBI:57701"/>
        <dbReference type="EC" id="4.2.3.5"/>
    </reaction>
</comment>
<comment type="cofactor">
    <cofactor evidence="1">
        <name>FMNH2</name>
        <dbReference type="ChEBI" id="CHEBI:57618"/>
    </cofactor>
    <text evidence="1">Reduced FMN (FMNH(2)).</text>
</comment>
<comment type="pathway">
    <text evidence="1">Metabolic intermediate biosynthesis; chorismate biosynthesis; chorismate from D-erythrose 4-phosphate and phosphoenolpyruvate: step 7/7.</text>
</comment>
<comment type="subunit">
    <text evidence="1">Homotetramer.</text>
</comment>
<comment type="similarity">
    <text evidence="1">Belongs to the chorismate synthase family.</text>
</comment>
<reference key="1">
    <citation type="journal article" date="2003" name="Nature">
        <title>The genome sequence of Bacillus anthracis Ames and comparison to closely related bacteria.</title>
        <authorList>
            <person name="Read T.D."/>
            <person name="Peterson S.N."/>
            <person name="Tourasse N.J."/>
            <person name="Baillie L.W."/>
            <person name="Paulsen I.T."/>
            <person name="Nelson K.E."/>
            <person name="Tettelin H."/>
            <person name="Fouts D.E."/>
            <person name="Eisen J.A."/>
            <person name="Gill S.R."/>
            <person name="Holtzapple E.K."/>
            <person name="Okstad O.A."/>
            <person name="Helgason E."/>
            <person name="Rilstone J."/>
            <person name="Wu M."/>
            <person name="Kolonay J.F."/>
            <person name="Beanan M.J."/>
            <person name="Dodson R.J."/>
            <person name="Brinkac L.M."/>
            <person name="Gwinn M.L."/>
            <person name="DeBoy R.T."/>
            <person name="Madpu R."/>
            <person name="Daugherty S.C."/>
            <person name="Durkin A.S."/>
            <person name="Haft D.H."/>
            <person name="Nelson W.C."/>
            <person name="Peterson J.D."/>
            <person name="Pop M."/>
            <person name="Khouri H.M."/>
            <person name="Radune D."/>
            <person name="Benton J.L."/>
            <person name="Mahamoud Y."/>
            <person name="Jiang L."/>
            <person name="Hance I.R."/>
            <person name="Weidman J.F."/>
            <person name="Berry K.J."/>
            <person name="Plaut R.D."/>
            <person name="Wolf A.M."/>
            <person name="Watkins K.L."/>
            <person name="Nierman W.C."/>
            <person name="Hazen A."/>
            <person name="Cline R.T."/>
            <person name="Redmond C."/>
            <person name="Thwaite J.E."/>
            <person name="White O."/>
            <person name="Salzberg S.L."/>
            <person name="Thomason B."/>
            <person name="Friedlander A.M."/>
            <person name="Koehler T.M."/>
            <person name="Hanna P.C."/>
            <person name="Kolstoe A.-B."/>
            <person name="Fraser C.M."/>
        </authorList>
    </citation>
    <scope>NUCLEOTIDE SEQUENCE [LARGE SCALE GENOMIC DNA]</scope>
    <source>
        <strain>Ames / isolate Porton</strain>
    </source>
</reference>
<reference key="2">
    <citation type="journal article" date="2009" name="J. Bacteriol.">
        <title>The complete genome sequence of Bacillus anthracis Ames 'Ancestor'.</title>
        <authorList>
            <person name="Ravel J."/>
            <person name="Jiang L."/>
            <person name="Stanley S.T."/>
            <person name="Wilson M.R."/>
            <person name="Decker R.S."/>
            <person name="Read T.D."/>
            <person name="Worsham P."/>
            <person name="Keim P.S."/>
            <person name="Salzberg S.L."/>
            <person name="Fraser-Liggett C.M."/>
            <person name="Rasko D.A."/>
        </authorList>
    </citation>
    <scope>NUCLEOTIDE SEQUENCE [LARGE SCALE GENOMIC DNA]</scope>
    <source>
        <strain>Ames ancestor</strain>
    </source>
</reference>
<reference key="3">
    <citation type="submission" date="2004-01" db="EMBL/GenBank/DDBJ databases">
        <title>Complete genome sequence of Bacillus anthracis Sterne.</title>
        <authorList>
            <person name="Brettin T.S."/>
            <person name="Bruce D."/>
            <person name="Challacombe J.F."/>
            <person name="Gilna P."/>
            <person name="Han C."/>
            <person name="Hill K."/>
            <person name="Hitchcock P."/>
            <person name="Jackson P."/>
            <person name="Keim P."/>
            <person name="Longmire J."/>
            <person name="Lucas S."/>
            <person name="Okinaka R."/>
            <person name="Richardson P."/>
            <person name="Rubin E."/>
            <person name="Tice H."/>
        </authorList>
    </citation>
    <scope>NUCLEOTIDE SEQUENCE [LARGE SCALE GENOMIC DNA]</scope>
    <source>
        <strain>Sterne</strain>
    </source>
</reference>
<proteinExistence type="inferred from homology"/>
<gene>
    <name evidence="1" type="primary">aroC1</name>
    <name evidence="1" type="synonym">aroC2</name>
    <name type="ordered locus">BA_2956</name>
    <name type="ordered locus">GBAA_2956</name>
    <name type="ordered locus">BAS2747</name>
</gene>
<accession>Q81P61</accession>
<accession>Q6HXD3</accession>
<accession>Q6KRF3</accession>
<dbReference type="EC" id="4.2.3.5" evidence="1"/>
<dbReference type="EMBL" id="AE016879">
    <property type="protein sequence ID" value="AAP26777.1"/>
    <property type="molecule type" value="Genomic_DNA"/>
</dbReference>
<dbReference type="EMBL" id="AE017334">
    <property type="protein sequence ID" value="AAT32075.1"/>
    <property type="molecule type" value="Genomic_DNA"/>
</dbReference>
<dbReference type="EMBL" id="AE017225">
    <property type="protein sequence ID" value="AAT55056.1"/>
    <property type="molecule type" value="Genomic_DNA"/>
</dbReference>
<dbReference type="RefSeq" id="NP_845291.1">
    <property type="nucleotide sequence ID" value="NC_003997.3"/>
</dbReference>
<dbReference type="RefSeq" id="YP_029005.1">
    <property type="nucleotide sequence ID" value="NC_005945.1"/>
</dbReference>
<dbReference type="SMR" id="Q81P61"/>
<dbReference type="STRING" id="261594.GBAA_2956"/>
<dbReference type="DNASU" id="1089216"/>
<dbReference type="GeneID" id="45022774"/>
<dbReference type="KEGG" id="ban:BA_2956"/>
<dbReference type="KEGG" id="banh:HYU01_14640"/>
<dbReference type="KEGG" id="bar:GBAA_2956"/>
<dbReference type="KEGG" id="bat:BAS2747"/>
<dbReference type="PATRIC" id="fig|198094.11.peg.2937"/>
<dbReference type="eggNOG" id="COG0082">
    <property type="taxonomic scope" value="Bacteria"/>
</dbReference>
<dbReference type="HOGENOM" id="CLU_034547_2_0_9"/>
<dbReference type="OMA" id="YLENDMS"/>
<dbReference type="OrthoDB" id="9771806at2"/>
<dbReference type="UniPathway" id="UPA00053">
    <property type="reaction ID" value="UER00090"/>
</dbReference>
<dbReference type="Proteomes" id="UP000000427">
    <property type="component" value="Chromosome"/>
</dbReference>
<dbReference type="Proteomes" id="UP000000594">
    <property type="component" value="Chromosome"/>
</dbReference>
<dbReference type="GO" id="GO:0005829">
    <property type="term" value="C:cytosol"/>
    <property type="evidence" value="ECO:0007669"/>
    <property type="project" value="TreeGrafter"/>
</dbReference>
<dbReference type="GO" id="GO:0004107">
    <property type="term" value="F:chorismate synthase activity"/>
    <property type="evidence" value="ECO:0007669"/>
    <property type="project" value="UniProtKB-UniRule"/>
</dbReference>
<dbReference type="GO" id="GO:0010181">
    <property type="term" value="F:FMN binding"/>
    <property type="evidence" value="ECO:0007669"/>
    <property type="project" value="TreeGrafter"/>
</dbReference>
<dbReference type="GO" id="GO:0008652">
    <property type="term" value="P:amino acid biosynthetic process"/>
    <property type="evidence" value="ECO:0007669"/>
    <property type="project" value="UniProtKB-KW"/>
</dbReference>
<dbReference type="GO" id="GO:0009073">
    <property type="term" value="P:aromatic amino acid family biosynthetic process"/>
    <property type="evidence" value="ECO:0007669"/>
    <property type="project" value="UniProtKB-KW"/>
</dbReference>
<dbReference type="GO" id="GO:0009423">
    <property type="term" value="P:chorismate biosynthetic process"/>
    <property type="evidence" value="ECO:0007669"/>
    <property type="project" value="UniProtKB-UniRule"/>
</dbReference>
<dbReference type="CDD" id="cd07304">
    <property type="entry name" value="Chorismate_synthase"/>
    <property type="match status" value="1"/>
</dbReference>
<dbReference type="FunFam" id="3.60.150.10:FF:000002">
    <property type="entry name" value="Chorismate synthase"/>
    <property type="match status" value="1"/>
</dbReference>
<dbReference type="Gene3D" id="3.60.150.10">
    <property type="entry name" value="Chorismate synthase AroC"/>
    <property type="match status" value="1"/>
</dbReference>
<dbReference type="HAMAP" id="MF_00300">
    <property type="entry name" value="Chorismate_synth"/>
    <property type="match status" value="1"/>
</dbReference>
<dbReference type="InterPro" id="IPR000453">
    <property type="entry name" value="Chorismate_synth"/>
</dbReference>
<dbReference type="InterPro" id="IPR035904">
    <property type="entry name" value="Chorismate_synth_AroC_sf"/>
</dbReference>
<dbReference type="InterPro" id="IPR020541">
    <property type="entry name" value="Chorismate_synthase_CS"/>
</dbReference>
<dbReference type="NCBIfam" id="TIGR00033">
    <property type="entry name" value="aroC"/>
    <property type="match status" value="1"/>
</dbReference>
<dbReference type="NCBIfam" id="NF003793">
    <property type="entry name" value="PRK05382.1"/>
    <property type="match status" value="1"/>
</dbReference>
<dbReference type="NCBIfam" id="NF009113">
    <property type="entry name" value="PRK12463.1"/>
    <property type="match status" value="1"/>
</dbReference>
<dbReference type="PANTHER" id="PTHR21085">
    <property type="entry name" value="CHORISMATE SYNTHASE"/>
    <property type="match status" value="1"/>
</dbReference>
<dbReference type="PANTHER" id="PTHR21085:SF0">
    <property type="entry name" value="CHORISMATE SYNTHASE"/>
    <property type="match status" value="1"/>
</dbReference>
<dbReference type="Pfam" id="PF01264">
    <property type="entry name" value="Chorismate_synt"/>
    <property type="match status" value="1"/>
</dbReference>
<dbReference type="PIRSF" id="PIRSF001456">
    <property type="entry name" value="Chorismate_synth"/>
    <property type="match status" value="1"/>
</dbReference>
<dbReference type="SUPFAM" id="SSF103263">
    <property type="entry name" value="Chorismate synthase, AroC"/>
    <property type="match status" value="1"/>
</dbReference>
<dbReference type="PROSITE" id="PS00787">
    <property type="entry name" value="CHORISMATE_SYNTHASE_1"/>
    <property type="match status" value="1"/>
</dbReference>
<dbReference type="PROSITE" id="PS00788">
    <property type="entry name" value="CHORISMATE_SYNTHASE_2"/>
    <property type="match status" value="1"/>
</dbReference>
<dbReference type="PROSITE" id="PS00789">
    <property type="entry name" value="CHORISMATE_SYNTHASE_3"/>
    <property type="match status" value="1"/>
</dbReference>
<keyword id="KW-0028">Amino-acid biosynthesis</keyword>
<keyword id="KW-0057">Aromatic amino acid biosynthesis</keyword>
<keyword id="KW-0274">FAD</keyword>
<keyword id="KW-0285">Flavoprotein</keyword>
<keyword id="KW-0288">FMN</keyword>
<keyword id="KW-0456">Lyase</keyword>
<keyword id="KW-0521">NADP</keyword>
<keyword id="KW-1185">Reference proteome</keyword>